<reference key="1">
    <citation type="journal article" date="1999" name="Nature">
        <title>Sequence and analysis of chromosome 2 of the plant Arabidopsis thaliana.</title>
        <authorList>
            <person name="Lin X."/>
            <person name="Kaul S."/>
            <person name="Rounsley S.D."/>
            <person name="Shea T.P."/>
            <person name="Benito M.-I."/>
            <person name="Town C.D."/>
            <person name="Fujii C.Y."/>
            <person name="Mason T.M."/>
            <person name="Bowman C.L."/>
            <person name="Barnstead M.E."/>
            <person name="Feldblyum T.V."/>
            <person name="Buell C.R."/>
            <person name="Ketchum K.A."/>
            <person name="Lee J.J."/>
            <person name="Ronning C.M."/>
            <person name="Koo H.L."/>
            <person name="Moffat K.S."/>
            <person name="Cronin L.A."/>
            <person name="Shen M."/>
            <person name="Pai G."/>
            <person name="Van Aken S."/>
            <person name="Umayam L."/>
            <person name="Tallon L.J."/>
            <person name="Gill J.E."/>
            <person name="Adams M.D."/>
            <person name="Carrera A.J."/>
            <person name="Creasy T.H."/>
            <person name="Goodman H.M."/>
            <person name="Somerville C.R."/>
            <person name="Copenhaver G.P."/>
            <person name="Preuss D."/>
            <person name="Nierman W.C."/>
            <person name="White O."/>
            <person name="Eisen J.A."/>
            <person name="Salzberg S.L."/>
            <person name="Fraser C.M."/>
            <person name="Venter J.C."/>
        </authorList>
    </citation>
    <scope>NUCLEOTIDE SEQUENCE [LARGE SCALE GENOMIC DNA]</scope>
    <source>
        <strain>cv. Columbia</strain>
    </source>
</reference>
<reference key="2">
    <citation type="journal article" date="2017" name="Plant J.">
        <title>Araport11: a complete reannotation of the Arabidopsis thaliana reference genome.</title>
        <authorList>
            <person name="Cheng C.Y."/>
            <person name="Krishnakumar V."/>
            <person name="Chan A.P."/>
            <person name="Thibaud-Nissen F."/>
            <person name="Schobel S."/>
            <person name="Town C.D."/>
        </authorList>
    </citation>
    <scope>GENOME REANNOTATION</scope>
    <source>
        <strain>cv. Columbia</strain>
    </source>
</reference>
<reference key="3">
    <citation type="journal article" date="2003" name="Science">
        <title>Empirical analysis of transcriptional activity in the Arabidopsis genome.</title>
        <authorList>
            <person name="Yamada K."/>
            <person name="Lim J."/>
            <person name="Dale J.M."/>
            <person name="Chen H."/>
            <person name="Shinn P."/>
            <person name="Palm C.J."/>
            <person name="Southwick A.M."/>
            <person name="Wu H.C."/>
            <person name="Kim C.J."/>
            <person name="Nguyen M."/>
            <person name="Pham P.K."/>
            <person name="Cheuk R.F."/>
            <person name="Karlin-Newmann G."/>
            <person name="Liu S.X."/>
            <person name="Lam B."/>
            <person name="Sakano H."/>
            <person name="Wu T."/>
            <person name="Yu G."/>
            <person name="Miranda M."/>
            <person name="Quach H.L."/>
            <person name="Tripp M."/>
            <person name="Chang C.H."/>
            <person name="Lee J.M."/>
            <person name="Toriumi M.J."/>
            <person name="Chan M.M."/>
            <person name="Tang C.C."/>
            <person name="Onodera C.S."/>
            <person name="Deng J.M."/>
            <person name="Akiyama K."/>
            <person name="Ansari Y."/>
            <person name="Arakawa T."/>
            <person name="Banh J."/>
            <person name="Banno F."/>
            <person name="Bowser L."/>
            <person name="Brooks S.Y."/>
            <person name="Carninci P."/>
            <person name="Chao Q."/>
            <person name="Choy N."/>
            <person name="Enju A."/>
            <person name="Goldsmith A.D."/>
            <person name="Gurjal M."/>
            <person name="Hansen N.F."/>
            <person name="Hayashizaki Y."/>
            <person name="Johnson-Hopson C."/>
            <person name="Hsuan V.W."/>
            <person name="Iida K."/>
            <person name="Karnes M."/>
            <person name="Khan S."/>
            <person name="Koesema E."/>
            <person name="Ishida J."/>
            <person name="Jiang P.X."/>
            <person name="Jones T."/>
            <person name="Kawai J."/>
            <person name="Kamiya A."/>
            <person name="Meyers C."/>
            <person name="Nakajima M."/>
            <person name="Narusaka M."/>
            <person name="Seki M."/>
            <person name="Sakurai T."/>
            <person name="Satou M."/>
            <person name="Tamse R."/>
            <person name="Vaysberg M."/>
            <person name="Wallender E.K."/>
            <person name="Wong C."/>
            <person name="Yamamura Y."/>
            <person name="Yuan S."/>
            <person name="Shinozaki K."/>
            <person name="Davis R.W."/>
            <person name="Theologis A."/>
            <person name="Ecker J.R."/>
        </authorList>
    </citation>
    <scope>NUCLEOTIDE SEQUENCE [LARGE SCALE MRNA]</scope>
    <source>
        <strain>cv. Columbia</strain>
    </source>
</reference>
<reference key="4">
    <citation type="journal article" date="2005" name="Plant Physiol.">
        <title>The zinc-finger protein Zat12 plays a central role in reactive oxygen and abiotic stress signaling in Arabidopsis.</title>
        <authorList>
            <person name="Davletova S."/>
            <person name="Schlauch K."/>
            <person name="Coutu J."/>
            <person name="Mittler R."/>
        </authorList>
    </citation>
    <scope>INDUCTION BY HYDROGEN PEROXIDE</scope>
</reference>
<reference key="5">
    <citation type="journal article" date="2010" name="Acta Physiol. Plant.">
        <title>Sequence and expression analysis of the Arabidopsis IQM family.</title>
        <authorList>
            <person name="Zhou Y."/>
            <person name="Chen Y."/>
            <person name="Yamamoto K.T."/>
            <person name="Duan J."/>
            <person name="Tian C."/>
        </authorList>
    </citation>
    <scope>GENE FAMILY</scope>
    <scope>NOMENCLATURE</scope>
    <scope>TISSUE SPECIFICITY</scope>
    <scope>INDUCTION</scope>
</reference>
<proteinExistence type="evidence at transcript level"/>
<dbReference type="EMBL" id="AC004484">
    <property type="protein sequence ID" value="AAC14530.1"/>
    <property type="molecule type" value="Genomic_DNA"/>
</dbReference>
<dbReference type="EMBL" id="CP002685">
    <property type="protein sequence ID" value="AEC07806.1"/>
    <property type="molecule type" value="Genomic_DNA"/>
</dbReference>
<dbReference type="EMBL" id="CP002685">
    <property type="protein sequence ID" value="ANM62513.1"/>
    <property type="molecule type" value="Genomic_DNA"/>
</dbReference>
<dbReference type="EMBL" id="AF419588">
    <property type="protein sequence ID" value="AAL31920.1"/>
    <property type="molecule type" value="mRNA"/>
</dbReference>
<dbReference type="EMBL" id="AY097341">
    <property type="protein sequence ID" value="AAM19857.1"/>
    <property type="molecule type" value="mRNA"/>
</dbReference>
<dbReference type="EMBL" id="AY128282">
    <property type="protein sequence ID" value="AAM91091.1"/>
    <property type="molecule type" value="mRNA"/>
</dbReference>
<dbReference type="PIR" id="E84657">
    <property type="entry name" value="E84657"/>
</dbReference>
<dbReference type="RefSeq" id="NP_001324665.1">
    <property type="nucleotide sequence ID" value="NM_001336041.1"/>
</dbReference>
<dbReference type="RefSeq" id="NP_565618.1">
    <property type="nucleotide sequence ID" value="NM_128177.3"/>
</dbReference>
<dbReference type="FunCoup" id="O64851">
    <property type="interactions" value="12"/>
</dbReference>
<dbReference type="STRING" id="3702.O64851"/>
<dbReference type="iPTMnet" id="O64851"/>
<dbReference type="PaxDb" id="3702-AT2G26190.1"/>
<dbReference type="ProteomicsDB" id="250636"/>
<dbReference type="EnsemblPlants" id="AT2G26190.1">
    <property type="protein sequence ID" value="AT2G26190.1"/>
    <property type="gene ID" value="AT2G26190"/>
</dbReference>
<dbReference type="EnsemblPlants" id="AT2G26190.3">
    <property type="protein sequence ID" value="AT2G26190.3"/>
    <property type="gene ID" value="AT2G26190"/>
</dbReference>
<dbReference type="GeneID" id="817159"/>
<dbReference type="Gramene" id="AT2G26190.1">
    <property type="protein sequence ID" value="AT2G26190.1"/>
    <property type="gene ID" value="AT2G26190"/>
</dbReference>
<dbReference type="Gramene" id="AT2G26190.3">
    <property type="protein sequence ID" value="AT2G26190.3"/>
    <property type="gene ID" value="AT2G26190"/>
</dbReference>
<dbReference type="KEGG" id="ath:AT2G26190"/>
<dbReference type="Araport" id="AT2G26190"/>
<dbReference type="TAIR" id="AT2G26190">
    <property type="gene designation" value="IQM4"/>
</dbReference>
<dbReference type="eggNOG" id="ENOG502QRIN">
    <property type="taxonomic scope" value="Eukaryota"/>
</dbReference>
<dbReference type="HOGENOM" id="CLU_026344_0_1_1"/>
<dbReference type="InParanoid" id="O64851"/>
<dbReference type="OMA" id="RFFYLTY"/>
<dbReference type="PhylomeDB" id="O64851"/>
<dbReference type="PRO" id="PR:O64851"/>
<dbReference type="Proteomes" id="UP000006548">
    <property type="component" value="Chromosome 2"/>
</dbReference>
<dbReference type="ExpressionAtlas" id="O64851">
    <property type="expression patterns" value="baseline and differential"/>
</dbReference>
<dbReference type="GO" id="GO:0009507">
    <property type="term" value="C:chloroplast"/>
    <property type="evidence" value="ECO:0000314"/>
    <property type="project" value="TAIR"/>
</dbReference>
<dbReference type="GO" id="GO:0005634">
    <property type="term" value="C:nucleus"/>
    <property type="evidence" value="ECO:0007669"/>
    <property type="project" value="UniProtKB-SubCell"/>
</dbReference>
<dbReference type="GO" id="GO:0005516">
    <property type="term" value="F:calmodulin binding"/>
    <property type="evidence" value="ECO:0000353"/>
    <property type="project" value="TAIR"/>
</dbReference>
<dbReference type="GO" id="GO:0071456">
    <property type="term" value="P:cellular response to hypoxia"/>
    <property type="evidence" value="ECO:0007007"/>
    <property type="project" value="TAIR"/>
</dbReference>
<dbReference type="GO" id="GO:0009737">
    <property type="term" value="P:response to abscisic acid"/>
    <property type="evidence" value="ECO:0000315"/>
    <property type="project" value="TAIR"/>
</dbReference>
<dbReference type="GO" id="GO:0009651">
    <property type="term" value="P:response to salt stress"/>
    <property type="evidence" value="ECO:0000315"/>
    <property type="project" value="TAIR"/>
</dbReference>
<dbReference type="InterPro" id="IPR044159">
    <property type="entry name" value="IQM"/>
</dbReference>
<dbReference type="PANTHER" id="PTHR31250">
    <property type="entry name" value="IQ DOMAIN-CONTAINING PROTEIN IQM3"/>
    <property type="match status" value="1"/>
</dbReference>
<dbReference type="PANTHER" id="PTHR31250:SF55">
    <property type="entry name" value="IQ DOMAIN-CONTAINING PROTEIN IQM4"/>
    <property type="match status" value="1"/>
</dbReference>
<feature type="chain" id="PRO_0000433920" description="IQ domain-containing protein IQM4">
    <location>
        <begin position="1"/>
        <end position="532"/>
    </location>
</feature>
<feature type="domain" description="IQ" evidence="2">
    <location>
        <begin position="136"/>
        <end position="165"/>
    </location>
</feature>
<feature type="region of interest" description="Disordered" evidence="3">
    <location>
        <begin position="47"/>
        <end position="67"/>
    </location>
</feature>
<feature type="region of interest" description="Disordered" evidence="3">
    <location>
        <begin position="85"/>
        <end position="104"/>
    </location>
</feature>
<feature type="region of interest" description="Disordered" evidence="3">
    <location>
        <begin position="410"/>
        <end position="443"/>
    </location>
</feature>
<feature type="region of interest" description="Disordered" evidence="3">
    <location>
        <begin position="487"/>
        <end position="513"/>
    </location>
</feature>
<feature type="compositionally biased region" description="Basic and acidic residues" evidence="3">
    <location>
        <begin position="56"/>
        <end position="66"/>
    </location>
</feature>
<feature type="compositionally biased region" description="Acidic residues" evidence="3">
    <location>
        <begin position="85"/>
        <end position="94"/>
    </location>
</feature>
<feature type="compositionally biased region" description="Polar residues" evidence="3">
    <location>
        <begin position="487"/>
        <end position="496"/>
    </location>
</feature>
<feature type="compositionally biased region" description="Pro residues" evidence="3">
    <location>
        <begin position="499"/>
        <end position="509"/>
    </location>
</feature>
<accession>O64851</accession>
<sequence length="532" mass="60487">MGLSLSLLLSAWKEVVTTQFFSFKNPVESFLETRSFSLKLKEGGLTSRTNSFKSENPQEKSPKTGMERSLSFNSWEIVTEVETEPMNKEDEEIVEPTKPARNSLNGRNCERIQITKPTITPPTPFVFFSPRPVTELDAAATTLQKVYKSYRTRRNLADCAVVVEELWWKTLDAAALNLSSVAFFEEEKHETAVSKWARARTRAAKVGKGLSKDEKAQKLALQHWLEAIDPRHRYGHNLHFYYDVWSASMSAQPFFYWLDIGDGKDVNLEHHPRSVLQKQCIKYLGPLEREAYEVIVEDGKLMNKQSMTLINSTEDSKSIFVLSTTRTLYVGQKKKGRFQHSSFLSGGATTAAGRLVAREGILEAIWPYSGHYLPTEDNFNEFISFLEENNVDMTNVKRCSVNEEYSSFNSSGYEEEATKEEEAEKKPAETIVTEEQEEEKERERPVFQLAKRLSCKWNSGVGPRIGCVRDYPMELQSQAFEQVSLSPRISPGSTRFPSPYGPIPSPRPSPRVRVSPRLAYMGIPSPRVQVNC</sequence>
<name>IQM4_ARATH</name>
<protein>
    <recommendedName>
        <fullName evidence="7">IQ domain-containing protein IQM4</fullName>
    </recommendedName>
    <alternativeName>
        <fullName evidence="6">IQ motif-containing protein 4</fullName>
    </alternativeName>
</protein>
<evidence type="ECO:0000250" key="1">
    <source>
        <dbReference type="UniProtKB" id="O82645"/>
    </source>
</evidence>
<evidence type="ECO:0000255" key="2">
    <source>
        <dbReference type="PROSITE-ProRule" id="PRU00116"/>
    </source>
</evidence>
<evidence type="ECO:0000256" key="3">
    <source>
        <dbReference type="SAM" id="MobiDB-lite"/>
    </source>
</evidence>
<evidence type="ECO:0000269" key="4">
    <source>
    </source>
</evidence>
<evidence type="ECO:0000269" key="5">
    <source ref="5"/>
</evidence>
<evidence type="ECO:0000303" key="6">
    <source ref="5"/>
</evidence>
<evidence type="ECO:0000305" key="7"/>
<evidence type="ECO:0000312" key="8">
    <source>
        <dbReference type="Araport" id="AT2G26190"/>
    </source>
</evidence>
<organism>
    <name type="scientific">Arabidopsis thaliana</name>
    <name type="common">Mouse-ear cress</name>
    <dbReference type="NCBI Taxonomy" id="3702"/>
    <lineage>
        <taxon>Eukaryota</taxon>
        <taxon>Viridiplantae</taxon>
        <taxon>Streptophyta</taxon>
        <taxon>Embryophyta</taxon>
        <taxon>Tracheophyta</taxon>
        <taxon>Spermatophyta</taxon>
        <taxon>Magnoliopsida</taxon>
        <taxon>eudicotyledons</taxon>
        <taxon>Gunneridae</taxon>
        <taxon>Pentapetalae</taxon>
        <taxon>rosids</taxon>
        <taxon>malvids</taxon>
        <taxon>Brassicales</taxon>
        <taxon>Brassicaceae</taxon>
        <taxon>Camelineae</taxon>
        <taxon>Arabidopsis</taxon>
    </lineage>
</organism>
<gene>
    <name evidence="6" type="primary">IQM4</name>
    <name evidence="8" type="ordered locus">At2g26190</name>
</gene>
<keyword id="KW-0963">Cytoplasm</keyword>
<keyword id="KW-0539">Nucleus</keyword>
<keyword id="KW-1185">Reference proteome</keyword>
<comment type="function">
    <text evidence="1">May be involved in biotic and abiotic stress responses.</text>
</comment>
<comment type="subcellular location">
    <subcellularLocation>
        <location evidence="1">Cytoplasm</location>
    </subcellularLocation>
    <subcellularLocation>
        <location evidence="1">Nucleus</location>
    </subcellularLocation>
</comment>
<comment type="tissue specificity">
    <text evidence="5">Expressed in roots, cauline leaves and flowers, and at lower levels in rosette leaves, stems and siliques.</text>
</comment>
<comment type="induction">
    <text evidence="4 5">By hydrogen peroxide (PubMed:16183833). Induced by light. Down-regulated by salt stress and treatment with mannitol (Ref.5).</text>
</comment>